<comment type="function">
    <text evidence="1">Catalyzes the ATP-dependent transfer of a sulfur to tRNA to produce 4-thiouridine in position 8 of tRNAs, which functions as a near-UV photosensor. Also catalyzes the transfer of sulfur to the sulfur carrier protein ThiS, forming ThiS-thiocarboxylate. This is a step in the synthesis of thiazole, in the thiamine biosynthesis pathway. The sulfur is donated as persulfide by IscS.</text>
</comment>
<comment type="catalytic activity">
    <reaction evidence="1">
        <text>[ThiI sulfur-carrier protein]-S-sulfanyl-L-cysteine + a uridine in tRNA + 2 reduced [2Fe-2S]-[ferredoxin] + ATP + H(+) = [ThiI sulfur-carrier protein]-L-cysteine + a 4-thiouridine in tRNA + 2 oxidized [2Fe-2S]-[ferredoxin] + AMP + diphosphate</text>
        <dbReference type="Rhea" id="RHEA:24176"/>
        <dbReference type="Rhea" id="RHEA-COMP:10000"/>
        <dbReference type="Rhea" id="RHEA-COMP:10001"/>
        <dbReference type="Rhea" id="RHEA-COMP:13337"/>
        <dbReference type="Rhea" id="RHEA-COMP:13338"/>
        <dbReference type="Rhea" id="RHEA-COMP:13339"/>
        <dbReference type="Rhea" id="RHEA-COMP:13340"/>
        <dbReference type="ChEBI" id="CHEBI:15378"/>
        <dbReference type="ChEBI" id="CHEBI:29950"/>
        <dbReference type="ChEBI" id="CHEBI:30616"/>
        <dbReference type="ChEBI" id="CHEBI:33019"/>
        <dbReference type="ChEBI" id="CHEBI:33737"/>
        <dbReference type="ChEBI" id="CHEBI:33738"/>
        <dbReference type="ChEBI" id="CHEBI:61963"/>
        <dbReference type="ChEBI" id="CHEBI:65315"/>
        <dbReference type="ChEBI" id="CHEBI:136798"/>
        <dbReference type="ChEBI" id="CHEBI:456215"/>
        <dbReference type="EC" id="2.8.1.4"/>
    </reaction>
</comment>
<comment type="catalytic activity">
    <reaction evidence="1">
        <text>[ThiS sulfur-carrier protein]-C-terminal Gly-Gly-AMP + S-sulfanyl-L-cysteinyl-[cysteine desulfurase] + AH2 = [ThiS sulfur-carrier protein]-C-terminal-Gly-aminoethanethioate + L-cysteinyl-[cysteine desulfurase] + A + AMP + 2 H(+)</text>
        <dbReference type="Rhea" id="RHEA:43340"/>
        <dbReference type="Rhea" id="RHEA-COMP:12157"/>
        <dbReference type="Rhea" id="RHEA-COMP:12158"/>
        <dbReference type="Rhea" id="RHEA-COMP:12910"/>
        <dbReference type="Rhea" id="RHEA-COMP:19908"/>
        <dbReference type="ChEBI" id="CHEBI:13193"/>
        <dbReference type="ChEBI" id="CHEBI:15378"/>
        <dbReference type="ChEBI" id="CHEBI:17499"/>
        <dbReference type="ChEBI" id="CHEBI:29950"/>
        <dbReference type="ChEBI" id="CHEBI:61963"/>
        <dbReference type="ChEBI" id="CHEBI:90618"/>
        <dbReference type="ChEBI" id="CHEBI:232372"/>
        <dbReference type="ChEBI" id="CHEBI:456215"/>
    </reaction>
</comment>
<comment type="pathway">
    <text evidence="1">Cofactor biosynthesis; thiamine diphosphate biosynthesis.</text>
</comment>
<comment type="subcellular location">
    <subcellularLocation>
        <location evidence="1">Cytoplasm</location>
    </subcellularLocation>
</comment>
<comment type="similarity">
    <text evidence="1">Belongs to the ThiI family.</text>
</comment>
<sequence>MLIIIRPSGEIALKSPRSRRNFEHTLANNIRSVIKEGKIWRSQGVLFLEVNDDNKNIEELSKVFGIASFSPVMSIKSYNNNLEDIINKAKEVFAEIVKGKIFSVRAKRIGSHNFTSLDVQRKVGEALYPFSRGVNLENPEVEVFIEIRNDVAYFYHKIIKGPKGLPVGVAGKTVVLFSGGIDSPVATWMMMKRGSIPVILNFNLGGSVHRKFVLEELSVLRKWSGGHKLKLFIVNGTDVLIKLSQIEKRNRVVMLKRVMYKVAERLCDKANVKSITTGESLSQVSSQTMTNLYVTEYGIKYPIFRPLIGFDKEEIVELARKIGTYEYSIKLPEYCAISTKARTSVELDEVLKDEENLNIDYEKVLENSEVIEI</sequence>
<reference key="1">
    <citation type="journal article" date="2009" name="Proc. Natl. Acad. Sci. U.S.A.">
        <title>Biogeography of the Sulfolobus islandicus pan-genome.</title>
        <authorList>
            <person name="Reno M.L."/>
            <person name="Held N.L."/>
            <person name="Fields C.J."/>
            <person name="Burke P.V."/>
            <person name="Whitaker R.J."/>
        </authorList>
    </citation>
    <scope>NUCLEOTIDE SEQUENCE [LARGE SCALE GENOMIC DNA]</scope>
    <source>
        <strain>M.16.27</strain>
    </source>
</reference>
<gene>
    <name evidence="1" type="primary">thiI</name>
    <name type="ordered locus">M1627_1887</name>
</gene>
<evidence type="ECO:0000255" key="1">
    <source>
        <dbReference type="HAMAP-Rule" id="MF_00021"/>
    </source>
</evidence>
<dbReference type="EC" id="2.8.1.4" evidence="1"/>
<dbReference type="EMBL" id="CP001401">
    <property type="protein sequence ID" value="ACP55758.1"/>
    <property type="molecule type" value="Genomic_DNA"/>
</dbReference>
<dbReference type="RefSeq" id="WP_012718973.1">
    <property type="nucleotide sequence ID" value="NC_012632.1"/>
</dbReference>
<dbReference type="SMR" id="C3MZC6"/>
<dbReference type="GeneID" id="84059171"/>
<dbReference type="KEGG" id="sim:M1627_1887"/>
<dbReference type="HOGENOM" id="CLU_037952_4_1_2"/>
<dbReference type="UniPathway" id="UPA00060"/>
<dbReference type="Proteomes" id="UP000002307">
    <property type="component" value="Chromosome"/>
</dbReference>
<dbReference type="GO" id="GO:0005829">
    <property type="term" value="C:cytosol"/>
    <property type="evidence" value="ECO:0007669"/>
    <property type="project" value="TreeGrafter"/>
</dbReference>
<dbReference type="GO" id="GO:0005524">
    <property type="term" value="F:ATP binding"/>
    <property type="evidence" value="ECO:0007669"/>
    <property type="project" value="UniProtKB-UniRule"/>
</dbReference>
<dbReference type="GO" id="GO:0004810">
    <property type="term" value="F:CCA tRNA nucleotidyltransferase activity"/>
    <property type="evidence" value="ECO:0007669"/>
    <property type="project" value="InterPro"/>
</dbReference>
<dbReference type="GO" id="GO:0000049">
    <property type="term" value="F:tRNA binding"/>
    <property type="evidence" value="ECO:0007669"/>
    <property type="project" value="UniProtKB-UniRule"/>
</dbReference>
<dbReference type="GO" id="GO:0140741">
    <property type="term" value="F:tRNA-uracil-4 sulfurtransferase activity"/>
    <property type="evidence" value="ECO:0007669"/>
    <property type="project" value="UniProtKB-EC"/>
</dbReference>
<dbReference type="GO" id="GO:0009228">
    <property type="term" value="P:thiamine biosynthetic process"/>
    <property type="evidence" value="ECO:0007669"/>
    <property type="project" value="UniProtKB-KW"/>
</dbReference>
<dbReference type="GO" id="GO:0009229">
    <property type="term" value="P:thiamine diphosphate biosynthetic process"/>
    <property type="evidence" value="ECO:0007669"/>
    <property type="project" value="UniProtKB-UniRule"/>
</dbReference>
<dbReference type="GO" id="GO:0052837">
    <property type="term" value="P:thiazole biosynthetic process"/>
    <property type="evidence" value="ECO:0007669"/>
    <property type="project" value="TreeGrafter"/>
</dbReference>
<dbReference type="GO" id="GO:0002937">
    <property type="term" value="P:tRNA 4-thiouridine biosynthesis"/>
    <property type="evidence" value="ECO:0007669"/>
    <property type="project" value="TreeGrafter"/>
</dbReference>
<dbReference type="CDD" id="cd01712">
    <property type="entry name" value="PPase_ThiI"/>
    <property type="match status" value="1"/>
</dbReference>
<dbReference type="CDD" id="cd11716">
    <property type="entry name" value="THUMP_ThiI"/>
    <property type="match status" value="1"/>
</dbReference>
<dbReference type="Gene3D" id="3.30.2130.30">
    <property type="match status" value="1"/>
</dbReference>
<dbReference type="Gene3D" id="3.40.50.620">
    <property type="entry name" value="HUPs"/>
    <property type="match status" value="1"/>
</dbReference>
<dbReference type="HAMAP" id="MF_00021">
    <property type="entry name" value="ThiI"/>
    <property type="match status" value="1"/>
</dbReference>
<dbReference type="InterPro" id="IPR014729">
    <property type="entry name" value="Rossmann-like_a/b/a_fold"/>
</dbReference>
<dbReference type="InterPro" id="IPR020536">
    <property type="entry name" value="ThiI_AANH"/>
</dbReference>
<dbReference type="InterPro" id="IPR054173">
    <property type="entry name" value="ThiI_fer"/>
</dbReference>
<dbReference type="InterPro" id="IPR049961">
    <property type="entry name" value="ThiI_N"/>
</dbReference>
<dbReference type="InterPro" id="IPR004114">
    <property type="entry name" value="THUMP_dom"/>
</dbReference>
<dbReference type="InterPro" id="IPR049962">
    <property type="entry name" value="THUMP_ThiI"/>
</dbReference>
<dbReference type="InterPro" id="IPR003720">
    <property type="entry name" value="tRNA_STrfase"/>
</dbReference>
<dbReference type="InterPro" id="IPR050102">
    <property type="entry name" value="tRNA_sulfurtransferase_ThiI"/>
</dbReference>
<dbReference type="NCBIfam" id="TIGR00342">
    <property type="entry name" value="tRNA uracil 4-sulfurtransferase ThiI"/>
    <property type="match status" value="1"/>
</dbReference>
<dbReference type="PANTHER" id="PTHR43209">
    <property type="entry name" value="TRNA SULFURTRANSFERASE"/>
    <property type="match status" value="1"/>
</dbReference>
<dbReference type="PANTHER" id="PTHR43209:SF1">
    <property type="entry name" value="TRNA SULFURTRANSFERASE"/>
    <property type="match status" value="1"/>
</dbReference>
<dbReference type="Pfam" id="PF02568">
    <property type="entry name" value="ThiI"/>
    <property type="match status" value="1"/>
</dbReference>
<dbReference type="Pfam" id="PF22025">
    <property type="entry name" value="ThiI_fer"/>
    <property type="match status" value="1"/>
</dbReference>
<dbReference type="Pfam" id="PF02926">
    <property type="entry name" value="THUMP"/>
    <property type="match status" value="1"/>
</dbReference>
<dbReference type="SMART" id="SM00981">
    <property type="entry name" value="THUMP"/>
    <property type="match status" value="1"/>
</dbReference>
<dbReference type="SUPFAM" id="SSF52402">
    <property type="entry name" value="Adenine nucleotide alpha hydrolases-like"/>
    <property type="match status" value="1"/>
</dbReference>
<dbReference type="SUPFAM" id="SSF143437">
    <property type="entry name" value="THUMP domain-like"/>
    <property type="match status" value="1"/>
</dbReference>
<dbReference type="PROSITE" id="PS51165">
    <property type="entry name" value="THUMP"/>
    <property type="match status" value="1"/>
</dbReference>
<proteinExistence type="inferred from homology"/>
<accession>C3MZC6</accession>
<organism>
    <name type="scientific">Saccharolobus islandicus (strain M.16.27)</name>
    <name type="common">Sulfolobus islandicus</name>
    <dbReference type="NCBI Taxonomy" id="427318"/>
    <lineage>
        <taxon>Archaea</taxon>
        <taxon>Thermoproteota</taxon>
        <taxon>Thermoprotei</taxon>
        <taxon>Sulfolobales</taxon>
        <taxon>Sulfolobaceae</taxon>
        <taxon>Saccharolobus</taxon>
    </lineage>
</organism>
<feature type="chain" id="PRO_1000201920" description="Probable tRNA sulfurtransferase">
    <location>
        <begin position="1"/>
        <end position="373"/>
    </location>
</feature>
<feature type="domain" description="THUMP" evidence="1">
    <location>
        <begin position="54"/>
        <end position="158"/>
    </location>
</feature>
<feature type="binding site" evidence="1">
    <location>
        <begin position="176"/>
        <end position="177"/>
    </location>
    <ligand>
        <name>ATP</name>
        <dbReference type="ChEBI" id="CHEBI:30616"/>
    </ligand>
</feature>
<feature type="binding site" evidence="1">
    <location>
        <begin position="201"/>
        <end position="202"/>
    </location>
    <ligand>
        <name>ATP</name>
        <dbReference type="ChEBI" id="CHEBI:30616"/>
    </ligand>
</feature>
<feature type="binding site" evidence="1">
    <location>
        <position position="256"/>
    </location>
    <ligand>
        <name>ATP</name>
        <dbReference type="ChEBI" id="CHEBI:30616"/>
    </ligand>
</feature>
<feature type="binding site" evidence="1">
    <location>
        <position position="278"/>
    </location>
    <ligand>
        <name>ATP</name>
        <dbReference type="ChEBI" id="CHEBI:30616"/>
    </ligand>
</feature>
<feature type="binding site" evidence="1">
    <location>
        <position position="287"/>
    </location>
    <ligand>
        <name>ATP</name>
        <dbReference type="ChEBI" id="CHEBI:30616"/>
    </ligand>
</feature>
<name>THII_SACI3</name>
<protein>
    <recommendedName>
        <fullName evidence="1">Probable tRNA sulfurtransferase</fullName>
        <ecNumber evidence="1">2.8.1.4</ecNumber>
    </recommendedName>
    <alternativeName>
        <fullName evidence="1">Sulfur carrier protein ThiS sulfurtransferase</fullName>
    </alternativeName>
    <alternativeName>
        <fullName evidence="1">Thiamine biosynthesis protein ThiI</fullName>
    </alternativeName>
    <alternativeName>
        <fullName evidence="1">tRNA 4-thiouridine synthase</fullName>
    </alternativeName>
</protein>
<keyword id="KW-0067">ATP-binding</keyword>
<keyword id="KW-0963">Cytoplasm</keyword>
<keyword id="KW-0547">Nucleotide-binding</keyword>
<keyword id="KW-0694">RNA-binding</keyword>
<keyword id="KW-0784">Thiamine biosynthesis</keyword>
<keyword id="KW-0808">Transferase</keyword>
<keyword id="KW-0820">tRNA-binding</keyword>